<name>DNAA_NOSS1</name>
<feature type="chain" id="PRO_0000114121" description="Chromosomal replication initiator protein DnaA">
    <location>
        <begin position="1"/>
        <end position="459"/>
    </location>
</feature>
<feature type="region of interest" description="Domain I, interacts with DnaA modulators" evidence="1">
    <location>
        <begin position="1"/>
        <end position="74"/>
    </location>
</feature>
<feature type="region of interest" description="Domain II" evidence="1">
    <location>
        <begin position="74"/>
        <end position="117"/>
    </location>
</feature>
<feature type="region of interest" description="Domain III, AAA+ region" evidence="1">
    <location>
        <begin position="118"/>
        <end position="334"/>
    </location>
</feature>
<feature type="region of interest" description="Domain IV, binds dsDNA" evidence="1">
    <location>
        <begin position="335"/>
        <end position="459"/>
    </location>
</feature>
<feature type="binding site" evidence="1">
    <location>
        <position position="162"/>
    </location>
    <ligand>
        <name>ATP</name>
        <dbReference type="ChEBI" id="CHEBI:30616"/>
    </ligand>
</feature>
<feature type="binding site" evidence="1">
    <location>
        <position position="164"/>
    </location>
    <ligand>
        <name>ATP</name>
        <dbReference type="ChEBI" id="CHEBI:30616"/>
    </ligand>
</feature>
<feature type="binding site" evidence="1">
    <location>
        <position position="165"/>
    </location>
    <ligand>
        <name>ATP</name>
        <dbReference type="ChEBI" id="CHEBI:30616"/>
    </ligand>
</feature>
<feature type="binding site" evidence="1">
    <location>
        <position position="166"/>
    </location>
    <ligand>
        <name>ATP</name>
        <dbReference type="ChEBI" id="CHEBI:30616"/>
    </ligand>
</feature>
<protein>
    <recommendedName>
        <fullName evidence="1">Chromosomal replication initiator protein DnaA</fullName>
    </recommendedName>
</protein>
<keyword id="KW-0067">ATP-binding</keyword>
<keyword id="KW-0963">Cytoplasm</keyword>
<keyword id="KW-0235">DNA replication</keyword>
<keyword id="KW-0238">DNA-binding</keyword>
<keyword id="KW-0446">Lipid-binding</keyword>
<keyword id="KW-0547">Nucleotide-binding</keyword>
<keyword id="KW-1185">Reference proteome</keyword>
<reference key="1">
    <citation type="journal article" date="2001" name="DNA Res.">
        <title>Complete genomic sequence of the filamentous nitrogen-fixing cyanobacterium Anabaena sp. strain PCC 7120.</title>
        <authorList>
            <person name="Kaneko T."/>
            <person name="Nakamura Y."/>
            <person name="Wolk C.P."/>
            <person name="Kuritz T."/>
            <person name="Sasamoto S."/>
            <person name="Watanabe A."/>
            <person name="Iriguchi M."/>
            <person name="Ishikawa A."/>
            <person name="Kawashima K."/>
            <person name="Kimura T."/>
            <person name="Kishida Y."/>
            <person name="Kohara M."/>
            <person name="Matsumoto M."/>
            <person name="Matsuno A."/>
            <person name="Muraki A."/>
            <person name="Nakazaki N."/>
            <person name="Shimpo S."/>
            <person name="Sugimoto M."/>
            <person name="Takazawa M."/>
            <person name="Yamada M."/>
            <person name="Yasuda M."/>
            <person name="Tabata S."/>
        </authorList>
    </citation>
    <scope>NUCLEOTIDE SEQUENCE [LARGE SCALE GENOMIC DNA]</scope>
    <source>
        <strain>PCC 7120 / SAG 25.82 / UTEX 2576</strain>
    </source>
</reference>
<organism>
    <name type="scientific">Nostoc sp. (strain PCC 7120 / SAG 25.82 / UTEX 2576)</name>
    <dbReference type="NCBI Taxonomy" id="103690"/>
    <lineage>
        <taxon>Bacteria</taxon>
        <taxon>Bacillati</taxon>
        <taxon>Cyanobacteriota</taxon>
        <taxon>Cyanophyceae</taxon>
        <taxon>Nostocales</taxon>
        <taxon>Nostocaceae</taxon>
        <taxon>Nostoc</taxon>
    </lineage>
</organism>
<evidence type="ECO:0000255" key="1">
    <source>
        <dbReference type="HAMAP-Rule" id="MF_00377"/>
    </source>
</evidence>
<sequence>MMEMPIDNLWSQVLERLQIELSRPTFETWIKTANAERLENNCLVIITPNPFARNWLQKYYISTIANVVQSILGHPVEIYITVAKGEEFEEIGGGGEWELPTTNIINETPNQNRQPNTELNAKYVFSRFVVGANNRMAHAASLAVAESPGREFNPLFLCGGVGLGKTHLMQAIGHYRWEICPNSKIFYVSTEQFTNDLITAIRNDSMQSFREHYRAADVLLVDDIQFIEGKEYTQEEFFHTFNTLHEAGKQVVIASDRPPNQIPSLQERLCSRFSMGLIADIQAPDLETRMAILQKKSEYEKIRLPRDVIEYIATNFTSNIRELEGALTRALAYISIWGLPMTVANLAPVLVTPMEKIEATPEAILTVIADNFDISIEDLKSNSRRREISWARQIGMYLMRQHTDLSFPRIGEEFGGKDHTTVLYSCDKIAQLVESDRGLSQTLRQLSDRIKMNSRSRKP</sequence>
<accession>Q8YVG9</accession>
<proteinExistence type="inferred from homology"/>
<dbReference type="EMBL" id="BA000019">
    <property type="protein sequence ID" value="BAB73708.1"/>
    <property type="molecule type" value="Genomic_DNA"/>
</dbReference>
<dbReference type="PIR" id="AC2057">
    <property type="entry name" value="AC2057"/>
</dbReference>
<dbReference type="SMR" id="Q8YVG9"/>
<dbReference type="STRING" id="103690.gene:10494033"/>
<dbReference type="KEGG" id="ana:alr2009"/>
<dbReference type="eggNOG" id="COG0593">
    <property type="taxonomic scope" value="Bacteria"/>
</dbReference>
<dbReference type="Proteomes" id="UP000002483">
    <property type="component" value="Chromosome"/>
</dbReference>
<dbReference type="GO" id="GO:0005737">
    <property type="term" value="C:cytoplasm"/>
    <property type="evidence" value="ECO:0007669"/>
    <property type="project" value="UniProtKB-SubCell"/>
</dbReference>
<dbReference type="GO" id="GO:0005886">
    <property type="term" value="C:plasma membrane"/>
    <property type="evidence" value="ECO:0007669"/>
    <property type="project" value="TreeGrafter"/>
</dbReference>
<dbReference type="GO" id="GO:0005524">
    <property type="term" value="F:ATP binding"/>
    <property type="evidence" value="ECO:0007669"/>
    <property type="project" value="UniProtKB-UniRule"/>
</dbReference>
<dbReference type="GO" id="GO:0016887">
    <property type="term" value="F:ATP hydrolysis activity"/>
    <property type="evidence" value="ECO:0007669"/>
    <property type="project" value="InterPro"/>
</dbReference>
<dbReference type="GO" id="GO:0003688">
    <property type="term" value="F:DNA replication origin binding"/>
    <property type="evidence" value="ECO:0007669"/>
    <property type="project" value="UniProtKB-UniRule"/>
</dbReference>
<dbReference type="GO" id="GO:0008289">
    <property type="term" value="F:lipid binding"/>
    <property type="evidence" value="ECO:0007669"/>
    <property type="project" value="UniProtKB-KW"/>
</dbReference>
<dbReference type="GO" id="GO:0006270">
    <property type="term" value="P:DNA replication initiation"/>
    <property type="evidence" value="ECO:0007669"/>
    <property type="project" value="UniProtKB-UniRule"/>
</dbReference>
<dbReference type="GO" id="GO:0006275">
    <property type="term" value="P:regulation of DNA replication"/>
    <property type="evidence" value="ECO:0007669"/>
    <property type="project" value="UniProtKB-UniRule"/>
</dbReference>
<dbReference type="CDD" id="cd00009">
    <property type="entry name" value="AAA"/>
    <property type="match status" value="1"/>
</dbReference>
<dbReference type="CDD" id="cd06571">
    <property type="entry name" value="Bac_DnaA_C"/>
    <property type="match status" value="1"/>
</dbReference>
<dbReference type="FunFam" id="3.40.50.300:FF:000150">
    <property type="entry name" value="Chromosomal replication initiator protein DnaA"/>
    <property type="match status" value="1"/>
</dbReference>
<dbReference type="Gene3D" id="1.10.1750.10">
    <property type="match status" value="1"/>
</dbReference>
<dbReference type="Gene3D" id="1.10.8.60">
    <property type="match status" value="1"/>
</dbReference>
<dbReference type="Gene3D" id="3.30.300.180">
    <property type="match status" value="1"/>
</dbReference>
<dbReference type="Gene3D" id="3.40.50.300">
    <property type="entry name" value="P-loop containing nucleotide triphosphate hydrolases"/>
    <property type="match status" value="1"/>
</dbReference>
<dbReference type="HAMAP" id="MF_00377">
    <property type="entry name" value="DnaA_bact"/>
    <property type="match status" value="1"/>
</dbReference>
<dbReference type="InterPro" id="IPR003593">
    <property type="entry name" value="AAA+_ATPase"/>
</dbReference>
<dbReference type="InterPro" id="IPR001957">
    <property type="entry name" value="Chromosome_initiator_DnaA"/>
</dbReference>
<dbReference type="InterPro" id="IPR020591">
    <property type="entry name" value="Chromosome_initiator_DnaA-like"/>
</dbReference>
<dbReference type="InterPro" id="IPR018312">
    <property type="entry name" value="Chromosome_initiator_DnaA_CS"/>
</dbReference>
<dbReference type="InterPro" id="IPR013159">
    <property type="entry name" value="DnaA_C"/>
</dbReference>
<dbReference type="InterPro" id="IPR013317">
    <property type="entry name" value="DnaA_dom"/>
</dbReference>
<dbReference type="InterPro" id="IPR024633">
    <property type="entry name" value="DnaA_N_dom"/>
</dbReference>
<dbReference type="InterPro" id="IPR038454">
    <property type="entry name" value="DnaA_N_sf"/>
</dbReference>
<dbReference type="InterPro" id="IPR027417">
    <property type="entry name" value="P-loop_NTPase"/>
</dbReference>
<dbReference type="InterPro" id="IPR010921">
    <property type="entry name" value="Trp_repressor/repl_initiator"/>
</dbReference>
<dbReference type="NCBIfam" id="TIGR00362">
    <property type="entry name" value="DnaA"/>
    <property type="match status" value="1"/>
</dbReference>
<dbReference type="PANTHER" id="PTHR30050">
    <property type="entry name" value="CHROMOSOMAL REPLICATION INITIATOR PROTEIN DNAA"/>
    <property type="match status" value="1"/>
</dbReference>
<dbReference type="PANTHER" id="PTHR30050:SF2">
    <property type="entry name" value="CHROMOSOMAL REPLICATION INITIATOR PROTEIN DNAA"/>
    <property type="match status" value="1"/>
</dbReference>
<dbReference type="Pfam" id="PF00308">
    <property type="entry name" value="Bac_DnaA"/>
    <property type="match status" value="1"/>
</dbReference>
<dbReference type="Pfam" id="PF08299">
    <property type="entry name" value="Bac_DnaA_C"/>
    <property type="match status" value="1"/>
</dbReference>
<dbReference type="Pfam" id="PF11638">
    <property type="entry name" value="DnaA_N"/>
    <property type="match status" value="1"/>
</dbReference>
<dbReference type="PRINTS" id="PR00051">
    <property type="entry name" value="DNAA"/>
</dbReference>
<dbReference type="SMART" id="SM00382">
    <property type="entry name" value="AAA"/>
    <property type="match status" value="1"/>
</dbReference>
<dbReference type="SMART" id="SM00760">
    <property type="entry name" value="Bac_DnaA_C"/>
    <property type="match status" value="1"/>
</dbReference>
<dbReference type="SUPFAM" id="SSF52540">
    <property type="entry name" value="P-loop containing nucleoside triphosphate hydrolases"/>
    <property type="match status" value="1"/>
</dbReference>
<dbReference type="SUPFAM" id="SSF48295">
    <property type="entry name" value="TrpR-like"/>
    <property type="match status" value="1"/>
</dbReference>
<dbReference type="PROSITE" id="PS01008">
    <property type="entry name" value="DNAA"/>
    <property type="match status" value="1"/>
</dbReference>
<gene>
    <name evidence="1" type="primary">dnaA</name>
    <name type="ordered locus">alr2009</name>
</gene>
<comment type="function">
    <text evidence="1">Plays an essential role in the initiation and regulation of chromosomal replication. ATP-DnaA binds to the origin of replication (oriC) to initiate formation of the DNA replication initiation complex once per cell cycle. Binds the DnaA box (a 9 base pair repeat at the origin) and separates the double-stranded (ds)DNA. Forms a right-handed helical filament on oriC DNA; dsDNA binds to the exterior of the filament while single-stranded (ss)DNA is stabiized in the filament's interior. The ATP-DnaA-oriC complex binds and stabilizes one strand of the AT-rich DNA unwinding element (DUE), permitting loading of DNA polymerase. After initiation quickly degrades to an ADP-DnaA complex that is not apt for DNA replication. Binds acidic phospholipids.</text>
</comment>
<comment type="subunit">
    <text evidence="1">Oligomerizes as a right-handed, spiral filament on DNA at oriC.</text>
</comment>
<comment type="subcellular location">
    <subcellularLocation>
        <location evidence="1">Cytoplasm</location>
    </subcellularLocation>
</comment>
<comment type="domain">
    <text evidence="1">Domain I is involved in oligomerization and binding regulators, domain II is flexibile and of varying length in different bacteria, domain III forms the AAA+ region, while domain IV binds dsDNA.</text>
</comment>
<comment type="similarity">
    <text evidence="1">Belongs to the DnaA family.</text>
</comment>